<evidence type="ECO:0000255" key="1">
    <source>
        <dbReference type="HAMAP-Rule" id="MF_01206"/>
    </source>
</evidence>
<organism>
    <name type="scientific">Shigella dysenteriae serotype 1 (strain Sd197)</name>
    <dbReference type="NCBI Taxonomy" id="300267"/>
    <lineage>
        <taxon>Bacteria</taxon>
        <taxon>Pseudomonadati</taxon>
        <taxon>Pseudomonadota</taxon>
        <taxon>Gammaproteobacteria</taxon>
        <taxon>Enterobacterales</taxon>
        <taxon>Enterobacteriaceae</taxon>
        <taxon>Shigella</taxon>
    </lineage>
</organism>
<dbReference type="EC" id="1.8.5.-" evidence="1"/>
<dbReference type="EMBL" id="CP000034">
    <property type="protein sequence ID" value="ABB61200.1"/>
    <property type="molecule type" value="Genomic_DNA"/>
</dbReference>
<dbReference type="RefSeq" id="WP_000740056.1">
    <property type="nucleotide sequence ID" value="NC_007606.1"/>
</dbReference>
<dbReference type="RefSeq" id="YP_402691.1">
    <property type="nucleotide sequence ID" value="NC_007606.1"/>
</dbReference>
<dbReference type="SMR" id="Q32HK5"/>
<dbReference type="STRING" id="300267.SDY_1035"/>
<dbReference type="EnsemblBacteria" id="ABB61200">
    <property type="protein sequence ID" value="ABB61200"/>
    <property type="gene ID" value="SDY_1035"/>
</dbReference>
<dbReference type="KEGG" id="sdy:SDY_1035"/>
<dbReference type="PATRIC" id="fig|300267.13.peg.1209"/>
<dbReference type="HOGENOM" id="CLU_045520_0_0_6"/>
<dbReference type="Proteomes" id="UP000002716">
    <property type="component" value="Chromosome"/>
</dbReference>
<dbReference type="GO" id="GO:0042597">
    <property type="term" value="C:periplasmic space"/>
    <property type="evidence" value="ECO:0007669"/>
    <property type="project" value="UniProtKB-SubCell"/>
</dbReference>
<dbReference type="GO" id="GO:0046872">
    <property type="term" value="F:metal ion binding"/>
    <property type="evidence" value="ECO:0007669"/>
    <property type="project" value="UniProtKB-KW"/>
</dbReference>
<dbReference type="GO" id="GO:0043546">
    <property type="term" value="F:molybdopterin cofactor binding"/>
    <property type="evidence" value="ECO:0007669"/>
    <property type="project" value="UniProtKB-UniRule"/>
</dbReference>
<dbReference type="GO" id="GO:0016672">
    <property type="term" value="F:oxidoreductase activity, acting on a sulfur group of donors, quinone or similar compound as acceptor"/>
    <property type="evidence" value="ECO:0007669"/>
    <property type="project" value="UniProtKB-UniRule"/>
</dbReference>
<dbReference type="GO" id="GO:0030091">
    <property type="term" value="P:protein repair"/>
    <property type="evidence" value="ECO:0007669"/>
    <property type="project" value="UniProtKB-UniRule"/>
</dbReference>
<dbReference type="CDD" id="cd02107">
    <property type="entry name" value="YedY_like_Moco"/>
    <property type="match status" value="1"/>
</dbReference>
<dbReference type="FunFam" id="3.90.420.10:FF:000001">
    <property type="entry name" value="Protein-methionine-sulfoxide reductase catalytic subunit MsrP"/>
    <property type="match status" value="1"/>
</dbReference>
<dbReference type="Gene3D" id="3.90.420.10">
    <property type="entry name" value="Oxidoreductase, molybdopterin-binding domain"/>
    <property type="match status" value="1"/>
</dbReference>
<dbReference type="HAMAP" id="MF_01206">
    <property type="entry name" value="MsrP"/>
    <property type="match status" value="1"/>
</dbReference>
<dbReference type="InterPro" id="IPR022867">
    <property type="entry name" value="MsrP"/>
</dbReference>
<dbReference type="InterPro" id="IPR000572">
    <property type="entry name" value="OxRdtase_Mopterin-bd_dom"/>
</dbReference>
<dbReference type="InterPro" id="IPR036374">
    <property type="entry name" value="OxRdtase_Mopterin-bd_sf"/>
</dbReference>
<dbReference type="InterPro" id="IPR006311">
    <property type="entry name" value="TAT_signal"/>
</dbReference>
<dbReference type="NCBIfam" id="NF003767">
    <property type="entry name" value="PRK05363.1"/>
    <property type="match status" value="1"/>
</dbReference>
<dbReference type="PANTHER" id="PTHR43032">
    <property type="entry name" value="PROTEIN-METHIONINE-SULFOXIDE REDUCTASE"/>
    <property type="match status" value="1"/>
</dbReference>
<dbReference type="PANTHER" id="PTHR43032:SF3">
    <property type="entry name" value="PROTEIN-METHIONINE-SULFOXIDE REDUCTASE CATALYTIC SUBUNIT MSRP"/>
    <property type="match status" value="1"/>
</dbReference>
<dbReference type="Pfam" id="PF00174">
    <property type="entry name" value="Oxidored_molyb"/>
    <property type="match status" value="1"/>
</dbReference>
<dbReference type="SUPFAM" id="SSF56524">
    <property type="entry name" value="Oxidoreductase molybdopterin-binding domain"/>
    <property type="match status" value="1"/>
</dbReference>
<dbReference type="PROSITE" id="PS51318">
    <property type="entry name" value="TAT"/>
    <property type="match status" value="1"/>
</dbReference>
<accession>Q32HK5</accession>
<proteinExistence type="inferred from homology"/>
<comment type="function">
    <text evidence="1">Part of the MsrPQ system that repairs oxidized periplasmic proteins containing methionine sulfoxide residues (Met-O), using respiratory chain electrons. Thus protects these proteins from oxidative-stress damage caused by reactive species of oxygen and chlorine generated by the host defense mechanisms. MsrPQ is essential for the maintenance of envelope integrity under bleach stress, rescuing a wide series of structurally unrelated periplasmic proteins from methionine oxidation, including the primary periplasmic chaperone SurA and the lipoprotein Pal. The catalytic subunit MsrP is non-stereospecific, being able to reduce both (R-) and (S-) diastereoisomers of methionine sulfoxide.</text>
</comment>
<comment type="catalytic activity">
    <reaction evidence="1">
        <text>L-methionyl-[protein] + a quinone + H2O = L-methionyl-(S)-S-oxide-[protein] + a quinol</text>
        <dbReference type="Rhea" id="RHEA:51292"/>
        <dbReference type="Rhea" id="RHEA-COMP:12313"/>
        <dbReference type="Rhea" id="RHEA-COMP:12315"/>
        <dbReference type="ChEBI" id="CHEBI:15377"/>
        <dbReference type="ChEBI" id="CHEBI:16044"/>
        <dbReference type="ChEBI" id="CHEBI:24646"/>
        <dbReference type="ChEBI" id="CHEBI:44120"/>
        <dbReference type="ChEBI" id="CHEBI:132124"/>
    </reaction>
</comment>
<comment type="catalytic activity">
    <reaction evidence="1">
        <text>L-methionyl-[protein] + a quinone + H2O = L-methionyl-(R)-S-oxide-[protein] + a quinol</text>
        <dbReference type="Rhea" id="RHEA:51296"/>
        <dbReference type="Rhea" id="RHEA-COMP:12313"/>
        <dbReference type="Rhea" id="RHEA-COMP:12314"/>
        <dbReference type="ChEBI" id="CHEBI:15377"/>
        <dbReference type="ChEBI" id="CHEBI:16044"/>
        <dbReference type="ChEBI" id="CHEBI:24646"/>
        <dbReference type="ChEBI" id="CHEBI:45764"/>
        <dbReference type="ChEBI" id="CHEBI:132124"/>
    </reaction>
</comment>
<comment type="cofactor">
    <cofactor evidence="1">
        <name>Mo-molybdopterin</name>
        <dbReference type="ChEBI" id="CHEBI:71302"/>
    </cofactor>
    <text evidence="1">Binds 1 Mo-molybdopterin (Mo-MPT) cofactor per subunit.</text>
</comment>
<comment type="subunit">
    <text evidence="1">Heterodimer of a catalytic subunit (MsrP) and a heme-binding subunit (MsrQ).</text>
</comment>
<comment type="subcellular location">
    <subcellularLocation>
        <location evidence="1">Periplasm</location>
    </subcellularLocation>
    <text evidence="1">Is attached to the inner membrane when interacting with the MsrQ subunit.</text>
</comment>
<comment type="PTM">
    <text evidence="1">Predicted to be exported by the Tat system. The position of the signal peptide cleavage has not been experimentally proven.</text>
</comment>
<comment type="similarity">
    <text evidence="1">Belongs to the MsrP family.</text>
</comment>
<reference key="1">
    <citation type="journal article" date="2005" name="Nucleic Acids Res.">
        <title>Genome dynamics and diversity of Shigella species, the etiologic agents of bacillary dysentery.</title>
        <authorList>
            <person name="Yang F."/>
            <person name="Yang J."/>
            <person name="Zhang X."/>
            <person name="Chen L."/>
            <person name="Jiang Y."/>
            <person name="Yan Y."/>
            <person name="Tang X."/>
            <person name="Wang J."/>
            <person name="Xiong Z."/>
            <person name="Dong J."/>
            <person name="Xue Y."/>
            <person name="Zhu Y."/>
            <person name="Xu X."/>
            <person name="Sun L."/>
            <person name="Chen S."/>
            <person name="Nie H."/>
            <person name="Peng J."/>
            <person name="Xu J."/>
            <person name="Wang Y."/>
            <person name="Yuan Z."/>
            <person name="Wen Y."/>
            <person name="Yao Z."/>
            <person name="Shen Y."/>
            <person name="Qiang B."/>
            <person name="Hou Y."/>
            <person name="Yu J."/>
            <person name="Jin Q."/>
        </authorList>
    </citation>
    <scope>NUCLEOTIDE SEQUENCE [LARGE SCALE GENOMIC DNA]</scope>
    <source>
        <strain>Sd197</strain>
    </source>
</reference>
<sequence length="334" mass="37367">MKKNQFLKESDITAESVFFMKRRQVLKALGISAAALSLPHAAHADLLSWFKGNDRPPAPAGKPLEFSKPAAWQNNLPLTPADKVSGYNNFYEFGLDKADPAANAGSLKTDTWTLKISGEVAKPLTLDHDDLTRRFPLEERIYRMRCVEAWSMVVPWIGFPLHKLLALAEPTSNAKYVAFETIYAPEQMPGLQDRFIGGGLKYPYVEGLRLDEAMHPLTLMTVGVYGKALPPQNGAPVRLIVPWKYGFKGIKSIVSIKLTREHPPTTWNLAAPDEYGFYANVNPHVDHPRWSQATERFIGSGGILDVQRQPTLLFNGYADQVASLYRGLDLRENF</sequence>
<protein>
    <recommendedName>
        <fullName evidence="1">Protein-methionine-sulfoxide reductase catalytic subunit MsrP</fullName>
        <ecNumber evidence="1">1.8.5.-</ecNumber>
    </recommendedName>
</protein>
<feature type="signal peptide" description="Tat-type signal" evidence="1">
    <location>
        <begin position="1"/>
        <end position="44"/>
    </location>
</feature>
<feature type="chain" id="PRO_1000066165" description="Protein-methionine-sulfoxide reductase catalytic subunit MsrP" evidence="1">
    <location>
        <begin position="45"/>
        <end position="334"/>
    </location>
</feature>
<feature type="binding site" evidence="1">
    <location>
        <position position="88"/>
    </location>
    <ligand>
        <name>Mo-molybdopterin</name>
        <dbReference type="ChEBI" id="CHEBI:71302"/>
    </ligand>
</feature>
<feature type="binding site" evidence="1">
    <location>
        <begin position="91"/>
        <end position="92"/>
    </location>
    <ligand>
        <name>Mo-molybdopterin</name>
        <dbReference type="ChEBI" id="CHEBI:71302"/>
    </ligand>
</feature>
<feature type="binding site" evidence="1">
    <location>
        <position position="146"/>
    </location>
    <ligand>
        <name>Mo-molybdopterin</name>
        <dbReference type="ChEBI" id="CHEBI:71302"/>
    </ligand>
    <ligandPart>
        <name>Mo</name>
        <dbReference type="ChEBI" id="CHEBI:28685"/>
    </ligandPart>
</feature>
<feature type="binding site" evidence="1">
    <location>
        <position position="181"/>
    </location>
    <ligand>
        <name>Mo-molybdopterin</name>
        <dbReference type="ChEBI" id="CHEBI:71302"/>
    </ligand>
</feature>
<feature type="binding site" evidence="1">
    <location>
        <position position="233"/>
    </location>
    <ligand>
        <name>Mo-molybdopterin</name>
        <dbReference type="ChEBI" id="CHEBI:71302"/>
    </ligand>
</feature>
<feature type="binding site" evidence="1">
    <location>
        <position position="238"/>
    </location>
    <ligand>
        <name>Mo-molybdopterin</name>
        <dbReference type="ChEBI" id="CHEBI:71302"/>
    </ligand>
</feature>
<feature type="binding site" evidence="1">
    <location>
        <begin position="249"/>
        <end position="251"/>
    </location>
    <ligand>
        <name>Mo-molybdopterin</name>
        <dbReference type="ChEBI" id="CHEBI:71302"/>
    </ligand>
</feature>
<name>MSRP_SHIDS</name>
<gene>
    <name evidence="1" type="primary">msrP</name>
    <name type="ordered locus">SDY_1035</name>
</gene>
<keyword id="KW-0479">Metal-binding</keyword>
<keyword id="KW-0500">Molybdenum</keyword>
<keyword id="KW-0560">Oxidoreductase</keyword>
<keyword id="KW-0574">Periplasm</keyword>
<keyword id="KW-1185">Reference proteome</keyword>
<keyword id="KW-0732">Signal</keyword>